<keyword id="KW-0067">ATP-binding</keyword>
<keyword id="KW-0997">Cell inner membrane</keyword>
<keyword id="KW-1003">Cell membrane</keyword>
<keyword id="KW-0963">Cytoplasm</keyword>
<keyword id="KW-0472">Membrane</keyword>
<keyword id="KW-0479">Metal-binding</keyword>
<keyword id="KW-0547">Nucleotide-binding</keyword>
<keyword id="KW-0653">Protein transport</keyword>
<keyword id="KW-1278">Translocase</keyword>
<keyword id="KW-0811">Translocation</keyword>
<keyword id="KW-0813">Transport</keyword>
<keyword id="KW-0862">Zinc</keyword>
<accession>A0RNI3</accession>
<name>SECA_CAMFF</name>
<evidence type="ECO:0000255" key="1">
    <source>
        <dbReference type="HAMAP-Rule" id="MF_01382"/>
    </source>
</evidence>
<evidence type="ECO:0000256" key="2">
    <source>
        <dbReference type="SAM" id="MobiDB-lite"/>
    </source>
</evidence>
<feature type="chain" id="PRO_0000320763" description="Protein translocase subunit SecA">
    <location>
        <begin position="1"/>
        <end position="855"/>
    </location>
</feature>
<feature type="region of interest" description="Disordered" evidence="2">
    <location>
        <begin position="815"/>
        <end position="837"/>
    </location>
</feature>
<feature type="binding site" evidence="1">
    <location>
        <position position="88"/>
    </location>
    <ligand>
        <name>ATP</name>
        <dbReference type="ChEBI" id="CHEBI:30616"/>
    </ligand>
</feature>
<feature type="binding site" evidence="1">
    <location>
        <begin position="106"/>
        <end position="110"/>
    </location>
    <ligand>
        <name>ATP</name>
        <dbReference type="ChEBI" id="CHEBI:30616"/>
    </ligand>
</feature>
<feature type="binding site" evidence="1">
    <location>
        <position position="509"/>
    </location>
    <ligand>
        <name>ATP</name>
        <dbReference type="ChEBI" id="CHEBI:30616"/>
    </ligand>
</feature>
<feature type="binding site" evidence="1">
    <location>
        <position position="832"/>
    </location>
    <ligand>
        <name>Zn(2+)</name>
        <dbReference type="ChEBI" id="CHEBI:29105"/>
    </ligand>
</feature>
<feature type="binding site" evidence="1">
    <location>
        <position position="834"/>
    </location>
    <ligand>
        <name>Zn(2+)</name>
        <dbReference type="ChEBI" id="CHEBI:29105"/>
    </ligand>
</feature>
<feature type="binding site" evidence="1">
    <location>
        <position position="843"/>
    </location>
    <ligand>
        <name>Zn(2+)</name>
        <dbReference type="ChEBI" id="CHEBI:29105"/>
    </ligand>
</feature>
<feature type="binding site" evidence="1">
    <location>
        <position position="844"/>
    </location>
    <ligand>
        <name>Zn(2+)</name>
        <dbReference type="ChEBI" id="CHEBI:29105"/>
    </ligand>
</feature>
<dbReference type="EC" id="7.4.2.8" evidence="1"/>
<dbReference type="EMBL" id="CP000487">
    <property type="protein sequence ID" value="ABK82879.1"/>
    <property type="molecule type" value="Genomic_DNA"/>
</dbReference>
<dbReference type="RefSeq" id="WP_002848972.1">
    <property type="nucleotide sequence ID" value="NC_008599.1"/>
</dbReference>
<dbReference type="SMR" id="A0RNI3"/>
<dbReference type="GeneID" id="61064422"/>
<dbReference type="KEGG" id="cff:CFF8240_0576"/>
<dbReference type="eggNOG" id="COG0653">
    <property type="taxonomic scope" value="Bacteria"/>
</dbReference>
<dbReference type="HOGENOM" id="CLU_005314_3_0_7"/>
<dbReference type="Proteomes" id="UP000000760">
    <property type="component" value="Chromosome"/>
</dbReference>
<dbReference type="GO" id="GO:0031522">
    <property type="term" value="C:cell envelope Sec protein transport complex"/>
    <property type="evidence" value="ECO:0007669"/>
    <property type="project" value="TreeGrafter"/>
</dbReference>
<dbReference type="GO" id="GO:0005829">
    <property type="term" value="C:cytosol"/>
    <property type="evidence" value="ECO:0007669"/>
    <property type="project" value="TreeGrafter"/>
</dbReference>
<dbReference type="GO" id="GO:0005886">
    <property type="term" value="C:plasma membrane"/>
    <property type="evidence" value="ECO:0007669"/>
    <property type="project" value="UniProtKB-SubCell"/>
</dbReference>
<dbReference type="GO" id="GO:0005524">
    <property type="term" value="F:ATP binding"/>
    <property type="evidence" value="ECO:0007669"/>
    <property type="project" value="UniProtKB-UniRule"/>
</dbReference>
<dbReference type="GO" id="GO:0046872">
    <property type="term" value="F:metal ion binding"/>
    <property type="evidence" value="ECO:0007669"/>
    <property type="project" value="UniProtKB-KW"/>
</dbReference>
<dbReference type="GO" id="GO:0008564">
    <property type="term" value="F:protein-exporting ATPase activity"/>
    <property type="evidence" value="ECO:0007669"/>
    <property type="project" value="UniProtKB-EC"/>
</dbReference>
<dbReference type="GO" id="GO:0065002">
    <property type="term" value="P:intracellular protein transmembrane transport"/>
    <property type="evidence" value="ECO:0007669"/>
    <property type="project" value="UniProtKB-UniRule"/>
</dbReference>
<dbReference type="GO" id="GO:0017038">
    <property type="term" value="P:protein import"/>
    <property type="evidence" value="ECO:0007669"/>
    <property type="project" value="InterPro"/>
</dbReference>
<dbReference type="GO" id="GO:0006605">
    <property type="term" value="P:protein targeting"/>
    <property type="evidence" value="ECO:0007669"/>
    <property type="project" value="UniProtKB-UniRule"/>
</dbReference>
<dbReference type="GO" id="GO:0043952">
    <property type="term" value="P:protein transport by the Sec complex"/>
    <property type="evidence" value="ECO:0007669"/>
    <property type="project" value="TreeGrafter"/>
</dbReference>
<dbReference type="CDD" id="cd17928">
    <property type="entry name" value="DEXDc_SecA"/>
    <property type="match status" value="1"/>
</dbReference>
<dbReference type="CDD" id="cd18803">
    <property type="entry name" value="SF2_C_secA"/>
    <property type="match status" value="1"/>
</dbReference>
<dbReference type="FunFam" id="3.40.50.300:FF:000429">
    <property type="entry name" value="Preprotein translocase subunit SecA"/>
    <property type="match status" value="1"/>
</dbReference>
<dbReference type="FunFam" id="3.90.1440.10:FF:000002">
    <property type="entry name" value="Protein translocase subunit SecA"/>
    <property type="match status" value="1"/>
</dbReference>
<dbReference type="Gene3D" id="1.10.3060.10">
    <property type="entry name" value="Helical scaffold and wing domains of SecA"/>
    <property type="match status" value="1"/>
</dbReference>
<dbReference type="Gene3D" id="3.40.50.300">
    <property type="entry name" value="P-loop containing nucleotide triphosphate hydrolases"/>
    <property type="match status" value="3"/>
</dbReference>
<dbReference type="Gene3D" id="3.90.1440.10">
    <property type="entry name" value="SecA, preprotein cross-linking domain"/>
    <property type="match status" value="1"/>
</dbReference>
<dbReference type="HAMAP" id="MF_01382">
    <property type="entry name" value="SecA"/>
    <property type="match status" value="1"/>
</dbReference>
<dbReference type="InterPro" id="IPR014001">
    <property type="entry name" value="Helicase_ATP-bd"/>
</dbReference>
<dbReference type="InterPro" id="IPR001650">
    <property type="entry name" value="Helicase_C-like"/>
</dbReference>
<dbReference type="InterPro" id="IPR027417">
    <property type="entry name" value="P-loop_NTPase"/>
</dbReference>
<dbReference type="InterPro" id="IPR004027">
    <property type="entry name" value="SEC_C_motif"/>
</dbReference>
<dbReference type="InterPro" id="IPR000185">
    <property type="entry name" value="SecA"/>
</dbReference>
<dbReference type="InterPro" id="IPR011115">
    <property type="entry name" value="SecA_DEAD"/>
</dbReference>
<dbReference type="InterPro" id="IPR014018">
    <property type="entry name" value="SecA_motor_DEAD"/>
</dbReference>
<dbReference type="InterPro" id="IPR011130">
    <property type="entry name" value="SecA_preprotein_X-link_dom"/>
</dbReference>
<dbReference type="InterPro" id="IPR044722">
    <property type="entry name" value="SecA_SF2_C"/>
</dbReference>
<dbReference type="InterPro" id="IPR011116">
    <property type="entry name" value="SecA_Wing/Scaffold"/>
</dbReference>
<dbReference type="InterPro" id="IPR036266">
    <property type="entry name" value="SecA_Wing/Scaffold_sf"/>
</dbReference>
<dbReference type="InterPro" id="IPR036670">
    <property type="entry name" value="SecA_X-link_sf"/>
</dbReference>
<dbReference type="NCBIfam" id="NF006630">
    <property type="entry name" value="PRK09200.1"/>
    <property type="match status" value="1"/>
</dbReference>
<dbReference type="NCBIfam" id="NF009538">
    <property type="entry name" value="PRK12904.1"/>
    <property type="match status" value="1"/>
</dbReference>
<dbReference type="NCBIfam" id="TIGR00963">
    <property type="entry name" value="secA"/>
    <property type="match status" value="1"/>
</dbReference>
<dbReference type="PANTHER" id="PTHR30612:SF0">
    <property type="entry name" value="CHLOROPLAST PROTEIN-TRANSPORTING ATPASE"/>
    <property type="match status" value="1"/>
</dbReference>
<dbReference type="PANTHER" id="PTHR30612">
    <property type="entry name" value="SECA INNER MEMBRANE COMPONENT OF SEC PROTEIN SECRETION SYSTEM"/>
    <property type="match status" value="1"/>
</dbReference>
<dbReference type="Pfam" id="PF21090">
    <property type="entry name" value="P-loop_SecA"/>
    <property type="match status" value="1"/>
</dbReference>
<dbReference type="Pfam" id="PF02810">
    <property type="entry name" value="SEC-C"/>
    <property type="match status" value="1"/>
</dbReference>
<dbReference type="Pfam" id="PF07517">
    <property type="entry name" value="SecA_DEAD"/>
    <property type="match status" value="1"/>
</dbReference>
<dbReference type="Pfam" id="PF01043">
    <property type="entry name" value="SecA_PP_bind"/>
    <property type="match status" value="1"/>
</dbReference>
<dbReference type="Pfam" id="PF07516">
    <property type="entry name" value="SecA_SW"/>
    <property type="match status" value="1"/>
</dbReference>
<dbReference type="PRINTS" id="PR00906">
    <property type="entry name" value="SECA"/>
</dbReference>
<dbReference type="SMART" id="SM00957">
    <property type="entry name" value="SecA_DEAD"/>
    <property type="match status" value="1"/>
</dbReference>
<dbReference type="SMART" id="SM00958">
    <property type="entry name" value="SecA_PP_bind"/>
    <property type="match status" value="1"/>
</dbReference>
<dbReference type="SUPFAM" id="SSF81886">
    <property type="entry name" value="Helical scaffold and wing domains of SecA"/>
    <property type="match status" value="1"/>
</dbReference>
<dbReference type="SUPFAM" id="SSF52540">
    <property type="entry name" value="P-loop containing nucleoside triphosphate hydrolases"/>
    <property type="match status" value="2"/>
</dbReference>
<dbReference type="SUPFAM" id="SSF81767">
    <property type="entry name" value="Pre-protein crosslinking domain of SecA"/>
    <property type="match status" value="1"/>
</dbReference>
<dbReference type="PROSITE" id="PS51196">
    <property type="entry name" value="SECA_MOTOR_DEAD"/>
    <property type="match status" value="1"/>
</dbReference>
<organism>
    <name type="scientific">Campylobacter fetus subsp. fetus (strain 82-40)</name>
    <dbReference type="NCBI Taxonomy" id="360106"/>
    <lineage>
        <taxon>Bacteria</taxon>
        <taxon>Pseudomonadati</taxon>
        <taxon>Campylobacterota</taxon>
        <taxon>Epsilonproteobacteria</taxon>
        <taxon>Campylobacterales</taxon>
        <taxon>Campylobacteraceae</taxon>
        <taxon>Campylobacter</taxon>
    </lineage>
</organism>
<sequence length="855" mass="97107">MITAIAKKIFGTRNDKEIKKYFKRVALINALEGKYSNLSDDELKSEFSKLKVDLLSKKVTKDDILNDVFAIVREVSKRTLNMRHFDVQLIGGMVLNDGRIAEMKTGEGKTLVATLPVVLNAMDEKGVHVVTVNDYLAKRDATQMSEIYNFLGLSVGVILSGEYDDEKRKIAYNSDITYGTNNEFGFDYLRDNMKFEVGQKVQREHNFVIVDEVDSILIDEARTPLIISGPTNRTLDGYIQADVVAKQLVRGEAADPRVPNSKATGDFVVDEKNRTIMITEAGIAKAEKLFGVDNLYNLENAILSHHLDQALKAHNLFEKDVHYVVRDSQVIIVDEFTGRLSEGRRFSEGLHQALEAKEGVKIQEESQTLADITFQNYFRMYSRLSGMTGTAQTEATEFSQIYKLEVISIPTNVPIKRVDRDDLIYKTENEKFKAVIEEIKRSNIKGQPVLVGTASIEKSEIFHKMLVKEKIAHSVLNAKNHEKEAEIIAQAGAKGAVTIATNMAGRGVDIRIDDEVRELGGLYIIGTERHESRRIDNQLRGRAGRQGDPGLSRFYLSLEDSLLRIFGSDKIKAIMDRLGIEEGESIESRLVTRAVENAQKKVESLHFESRKHILEYDDVANEQRKTVYKYRDELLNPDYDLKDKIISNRQDFVKTLLDEVNIFDGGLGDEFDISRLCEVVYGESGTKIDEDEIKGLDYHSLADKVIDKLAKDYDEKMSVIDDEQRKNIEKVLYLQVLDGAWREHLYQMDILKTGIGLRGYNQKDPLTEYKKESYNLFMELVNRLKNESIKTLQIVRFKTEDDENTDRALEKMQDEANLQNKFEKKPARNEPCPCGSGKKYKDCCGKSGPKKGVFA</sequence>
<reference key="1">
    <citation type="submission" date="2006-11" db="EMBL/GenBank/DDBJ databases">
        <title>Sequence of Campylobacter fetus subsp. fetus 82-40.</title>
        <authorList>
            <person name="Fouts D.E."/>
            <person name="Nelson K.E."/>
        </authorList>
    </citation>
    <scope>NUCLEOTIDE SEQUENCE [LARGE SCALE GENOMIC DNA]</scope>
    <source>
        <strain>82-40</strain>
    </source>
</reference>
<protein>
    <recommendedName>
        <fullName evidence="1">Protein translocase subunit SecA</fullName>
        <ecNumber evidence="1">7.4.2.8</ecNumber>
    </recommendedName>
</protein>
<gene>
    <name evidence="1" type="primary">secA</name>
    <name type="ordered locus">CFF8240_0576</name>
</gene>
<comment type="function">
    <text evidence="1">Part of the Sec protein translocase complex. Interacts with the SecYEG preprotein conducting channel. Has a central role in coupling the hydrolysis of ATP to the transfer of proteins into and across the cell membrane, serving as an ATP-driven molecular motor driving the stepwise translocation of polypeptide chains across the membrane.</text>
</comment>
<comment type="catalytic activity">
    <reaction evidence="1">
        <text>ATP + H2O + cellular proteinSide 1 = ADP + phosphate + cellular proteinSide 2.</text>
        <dbReference type="EC" id="7.4.2.8"/>
    </reaction>
</comment>
<comment type="cofactor">
    <cofactor evidence="1">
        <name>Zn(2+)</name>
        <dbReference type="ChEBI" id="CHEBI:29105"/>
    </cofactor>
    <text evidence="1">May bind 1 zinc ion per subunit.</text>
</comment>
<comment type="subunit">
    <text evidence="1">Monomer and homodimer. Part of the essential Sec protein translocation apparatus which comprises SecA, SecYEG and auxiliary proteins SecDF-YajC and YidC.</text>
</comment>
<comment type="subcellular location">
    <subcellularLocation>
        <location evidence="1">Cell inner membrane</location>
        <topology evidence="1">Peripheral membrane protein</topology>
        <orientation evidence="1">Cytoplasmic side</orientation>
    </subcellularLocation>
    <subcellularLocation>
        <location evidence="1">Cytoplasm</location>
    </subcellularLocation>
    <text evidence="1">Distribution is 50-50.</text>
</comment>
<comment type="similarity">
    <text evidence="1">Belongs to the SecA family.</text>
</comment>
<proteinExistence type="inferred from homology"/>